<evidence type="ECO:0000255" key="1">
    <source>
        <dbReference type="HAMAP-Rule" id="MF_00175"/>
    </source>
</evidence>
<evidence type="ECO:0000255" key="2">
    <source>
        <dbReference type="PROSITE-ProRule" id="PRU01250"/>
    </source>
</evidence>
<feature type="chain" id="PRO_1000123817" description="ATP-dependent Clp protease ATP-binding subunit ClpX">
    <location>
        <begin position="1"/>
        <end position="433"/>
    </location>
</feature>
<feature type="domain" description="ClpX-type ZB" evidence="2">
    <location>
        <begin position="1"/>
        <end position="53"/>
    </location>
</feature>
<feature type="binding site" evidence="2">
    <location>
        <position position="12"/>
    </location>
    <ligand>
        <name>Zn(2+)</name>
        <dbReference type="ChEBI" id="CHEBI:29105"/>
    </ligand>
</feature>
<feature type="binding site" evidence="2">
    <location>
        <position position="15"/>
    </location>
    <ligand>
        <name>Zn(2+)</name>
        <dbReference type="ChEBI" id="CHEBI:29105"/>
    </ligand>
</feature>
<feature type="binding site" evidence="2">
    <location>
        <position position="34"/>
    </location>
    <ligand>
        <name>Zn(2+)</name>
        <dbReference type="ChEBI" id="CHEBI:29105"/>
    </ligand>
</feature>
<feature type="binding site" evidence="2">
    <location>
        <position position="37"/>
    </location>
    <ligand>
        <name>Zn(2+)</name>
        <dbReference type="ChEBI" id="CHEBI:29105"/>
    </ligand>
</feature>
<feature type="binding site" evidence="1">
    <location>
        <begin position="118"/>
        <end position="125"/>
    </location>
    <ligand>
        <name>ATP</name>
        <dbReference type="ChEBI" id="CHEBI:30616"/>
    </ligand>
</feature>
<organism>
    <name type="scientific">Caldicellulosiruptor bescii (strain ATCC BAA-1888 / DSM 6725 / KCTC 15123 / Z-1320)</name>
    <name type="common">Anaerocellum thermophilum</name>
    <dbReference type="NCBI Taxonomy" id="521460"/>
    <lineage>
        <taxon>Bacteria</taxon>
        <taxon>Bacillati</taxon>
        <taxon>Bacillota</taxon>
        <taxon>Bacillota incertae sedis</taxon>
        <taxon>Caldicellulosiruptorales</taxon>
        <taxon>Caldicellulosiruptoraceae</taxon>
        <taxon>Caldicellulosiruptor</taxon>
    </lineage>
</organism>
<comment type="function">
    <text evidence="1">ATP-dependent specificity component of the Clp protease. It directs the protease to specific substrates. Can perform chaperone functions in the absence of ClpP.</text>
</comment>
<comment type="subunit">
    <text evidence="1">Component of the ClpX-ClpP complex. Forms a hexameric ring that, in the presence of ATP, binds to fourteen ClpP subunits assembled into a disk-like structure with a central cavity, resembling the structure of eukaryotic proteasomes.</text>
</comment>
<comment type="similarity">
    <text evidence="1">Belongs to the ClpX chaperone family.</text>
</comment>
<name>CLPX_CALBD</name>
<protein>
    <recommendedName>
        <fullName evidence="1">ATP-dependent Clp protease ATP-binding subunit ClpX</fullName>
    </recommendedName>
</protein>
<dbReference type="EMBL" id="CP001393">
    <property type="protein sequence ID" value="ACM59825.1"/>
    <property type="molecule type" value="Genomic_DNA"/>
</dbReference>
<dbReference type="RefSeq" id="WP_015907266.1">
    <property type="nucleotide sequence ID" value="NC_012034.1"/>
</dbReference>
<dbReference type="SMR" id="B9MQ33"/>
<dbReference type="STRING" id="521460.Athe_0710"/>
<dbReference type="GeneID" id="31772062"/>
<dbReference type="KEGG" id="ate:Athe_0710"/>
<dbReference type="eggNOG" id="COG1219">
    <property type="taxonomic scope" value="Bacteria"/>
</dbReference>
<dbReference type="HOGENOM" id="CLU_014218_8_2_9"/>
<dbReference type="Proteomes" id="UP000007723">
    <property type="component" value="Chromosome"/>
</dbReference>
<dbReference type="GO" id="GO:0009376">
    <property type="term" value="C:HslUV protease complex"/>
    <property type="evidence" value="ECO:0007669"/>
    <property type="project" value="TreeGrafter"/>
</dbReference>
<dbReference type="GO" id="GO:0005524">
    <property type="term" value="F:ATP binding"/>
    <property type="evidence" value="ECO:0007669"/>
    <property type="project" value="UniProtKB-UniRule"/>
</dbReference>
<dbReference type="GO" id="GO:0016887">
    <property type="term" value="F:ATP hydrolysis activity"/>
    <property type="evidence" value="ECO:0007669"/>
    <property type="project" value="InterPro"/>
</dbReference>
<dbReference type="GO" id="GO:0140662">
    <property type="term" value="F:ATP-dependent protein folding chaperone"/>
    <property type="evidence" value="ECO:0007669"/>
    <property type="project" value="InterPro"/>
</dbReference>
<dbReference type="GO" id="GO:0046983">
    <property type="term" value="F:protein dimerization activity"/>
    <property type="evidence" value="ECO:0007669"/>
    <property type="project" value="InterPro"/>
</dbReference>
<dbReference type="GO" id="GO:0051082">
    <property type="term" value="F:unfolded protein binding"/>
    <property type="evidence" value="ECO:0007669"/>
    <property type="project" value="UniProtKB-UniRule"/>
</dbReference>
<dbReference type="GO" id="GO:0008270">
    <property type="term" value="F:zinc ion binding"/>
    <property type="evidence" value="ECO:0007669"/>
    <property type="project" value="InterPro"/>
</dbReference>
<dbReference type="GO" id="GO:0051301">
    <property type="term" value="P:cell division"/>
    <property type="evidence" value="ECO:0007669"/>
    <property type="project" value="TreeGrafter"/>
</dbReference>
<dbReference type="GO" id="GO:0051603">
    <property type="term" value="P:proteolysis involved in protein catabolic process"/>
    <property type="evidence" value="ECO:0007669"/>
    <property type="project" value="TreeGrafter"/>
</dbReference>
<dbReference type="CDD" id="cd19497">
    <property type="entry name" value="RecA-like_ClpX"/>
    <property type="match status" value="1"/>
</dbReference>
<dbReference type="FunFam" id="1.10.8.60:FF:000002">
    <property type="entry name" value="ATP-dependent Clp protease ATP-binding subunit ClpX"/>
    <property type="match status" value="1"/>
</dbReference>
<dbReference type="FunFam" id="3.40.50.300:FF:000005">
    <property type="entry name" value="ATP-dependent Clp protease ATP-binding subunit ClpX"/>
    <property type="match status" value="1"/>
</dbReference>
<dbReference type="Gene3D" id="1.10.8.60">
    <property type="match status" value="1"/>
</dbReference>
<dbReference type="Gene3D" id="6.20.220.10">
    <property type="entry name" value="ClpX chaperone, C4-type zinc finger domain"/>
    <property type="match status" value="1"/>
</dbReference>
<dbReference type="Gene3D" id="3.40.50.300">
    <property type="entry name" value="P-loop containing nucleotide triphosphate hydrolases"/>
    <property type="match status" value="1"/>
</dbReference>
<dbReference type="HAMAP" id="MF_00175">
    <property type="entry name" value="ClpX"/>
    <property type="match status" value="1"/>
</dbReference>
<dbReference type="InterPro" id="IPR003593">
    <property type="entry name" value="AAA+_ATPase"/>
</dbReference>
<dbReference type="InterPro" id="IPR050052">
    <property type="entry name" value="ATP-dep_Clp_protease_ClpX"/>
</dbReference>
<dbReference type="InterPro" id="IPR003959">
    <property type="entry name" value="ATPase_AAA_core"/>
</dbReference>
<dbReference type="InterPro" id="IPR019489">
    <property type="entry name" value="Clp_ATPase_C"/>
</dbReference>
<dbReference type="InterPro" id="IPR004487">
    <property type="entry name" value="Clp_protease_ATP-bd_su_ClpX"/>
</dbReference>
<dbReference type="InterPro" id="IPR046425">
    <property type="entry name" value="ClpX_bact"/>
</dbReference>
<dbReference type="InterPro" id="IPR027417">
    <property type="entry name" value="P-loop_NTPase"/>
</dbReference>
<dbReference type="InterPro" id="IPR010603">
    <property type="entry name" value="Znf_CppX_C4"/>
</dbReference>
<dbReference type="InterPro" id="IPR038366">
    <property type="entry name" value="Znf_CppX_C4_sf"/>
</dbReference>
<dbReference type="NCBIfam" id="TIGR00382">
    <property type="entry name" value="clpX"/>
    <property type="match status" value="1"/>
</dbReference>
<dbReference type="NCBIfam" id="NF003745">
    <property type="entry name" value="PRK05342.1"/>
    <property type="match status" value="1"/>
</dbReference>
<dbReference type="PANTHER" id="PTHR48102:SF7">
    <property type="entry name" value="ATP-DEPENDENT CLP PROTEASE ATP-BINDING SUBUNIT CLPX-LIKE, MITOCHONDRIAL"/>
    <property type="match status" value="1"/>
</dbReference>
<dbReference type="PANTHER" id="PTHR48102">
    <property type="entry name" value="ATP-DEPENDENT CLP PROTEASE ATP-BINDING SUBUNIT CLPX-LIKE, MITOCHONDRIAL-RELATED"/>
    <property type="match status" value="1"/>
</dbReference>
<dbReference type="Pfam" id="PF07724">
    <property type="entry name" value="AAA_2"/>
    <property type="match status" value="1"/>
</dbReference>
<dbReference type="Pfam" id="PF10431">
    <property type="entry name" value="ClpB_D2-small"/>
    <property type="match status" value="1"/>
</dbReference>
<dbReference type="Pfam" id="PF06689">
    <property type="entry name" value="zf-C4_ClpX"/>
    <property type="match status" value="1"/>
</dbReference>
<dbReference type="SMART" id="SM00382">
    <property type="entry name" value="AAA"/>
    <property type="match status" value="1"/>
</dbReference>
<dbReference type="SMART" id="SM01086">
    <property type="entry name" value="ClpB_D2-small"/>
    <property type="match status" value="1"/>
</dbReference>
<dbReference type="SMART" id="SM00994">
    <property type="entry name" value="zf-C4_ClpX"/>
    <property type="match status" value="1"/>
</dbReference>
<dbReference type="SUPFAM" id="SSF57716">
    <property type="entry name" value="Glucocorticoid receptor-like (DNA-binding domain)"/>
    <property type="match status" value="1"/>
</dbReference>
<dbReference type="SUPFAM" id="SSF52540">
    <property type="entry name" value="P-loop containing nucleoside triphosphate hydrolases"/>
    <property type="match status" value="1"/>
</dbReference>
<dbReference type="PROSITE" id="PS51902">
    <property type="entry name" value="CLPX_ZB"/>
    <property type="match status" value="1"/>
</dbReference>
<sequence>MAKFEEKKQLRCSFCGKSQDEVRRLVAGPGVYICDECIELCSEIISEDFEEEEYNEFDDRLPTPKEIKEFLDQYVVGQDHAKKILSVAVYNHYKRIYYHNTKKDDVELQKSNILMLGPTGSGKTYLAQTLAKMLNVPFAIADATTLTEAGYVGEDVENILLRLIQNADYDIERAERGIIYIDEIDKIARKSDNPSITRDVSGEGVQQALLKILEGTIASVPPQGGRKHPHQEFIQIDTTNILFICGGAFEGIEKIIEKRIGEKTLGFNAKIESKKEKKIGDILRQIMPQDLLKFGMIPEFIGRVPIIVTLDALDKEALIKILTEPKNALVKQYQKLFAMDGVELEFEKDALEAIADKAIERNTGARGLRAIMEEIMLDVMFEIPSNDKIEKVIITKAAVLKEDKPIVIINENKKAQKRPKLKQRLQERRGNVS</sequence>
<proteinExistence type="inferred from homology"/>
<reference key="1">
    <citation type="submission" date="2009-01" db="EMBL/GenBank/DDBJ databases">
        <title>Complete sequence of chromosome of Caldicellulosiruptor becscii DSM 6725.</title>
        <authorList>
            <person name="Lucas S."/>
            <person name="Copeland A."/>
            <person name="Lapidus A."/>
            <person name="Glavina del Rio T."/>
            <person name="Tice H."/>
            <person name="Bruce D."/>
            <person name="Goodwin L."/>
            <person name="Pitluck S."/>
            <person name="Sims D."/>
            <person name="Meincke L."/>
            <person name="Brettin T."/>
            <person name="Detter J.C."/>
            <person name="Han C."/>
            <person name="Larimer F."/>
            <person name="Land M."/>
            <person name="Hauser L."/>
            <person name="Kyrpides N."/>
            <person name="Ovchinnikova G."/>
            <person name="Kataeva I."/>
            <person name="Adams M.W.W."/>
        </authorList>
    </citation>
    <scope>NUCLEOTIDE SEQUENCE [LARGE SCALE GENOMIC DNA]</scope>
    <source>
        <strain>ATCC BAA-1888 / DSM 6725 / KCTC 15123 / Z-1320</strain>
    </source>
</reference>
<accession>B9MQ33</accession>
<gene>
    <name evidence="1" type="primary">clpX</name>
    <name type="ordered locus">Athe_0710</name>
</gene>
<keyword id="KW-0067">ATP-binding</keyword>
<keyword id="KW-0143">Chaperone</keyword>
<keyword id="KW-0479">Metal-binding</keyword>
<keyword id="KW-0547">Nucleotide-binding</keyword>
<keyword id="KW-0862">Zinc</keyword>